<protein>
    <recommendedName>
        <fullName evidence="1">Sec-independent protein translocase protein TatB</fullName>
    </recommendedName>
</protein>
<gene>
    <name evidence="1" type="primary">tatB</name>
    <name type="ordered locus">Nmul_A0809</name>
</gene>
<keyword id="KW-0997">Cell inner membrane</keyword>
<keyword id="KW-1003">Cell membrane</keyword>
<keyword id="KW-0472">Membrane</keyword>
<keyword id="KW-0653">Protein transport</keyword>
<keyword id="KW-1185">Reference proteome</keyword>
<keyword id="KW-0811">Translocation</keyword>
<keyword id="KW-0812">Transmembrane</keyword>
<keyword id="KW-1133">Transmembrane helix</keyword>
<keyword id="KW-0813">Transport</keyword>
<sequence length="147" mass="15841">MFDISFSEILVIAAVALIVIGPERLPKVARTLGHVFGWAQRYVNDVKSDIQREIELDELKKWKASVEETGRSIENSVHTELDKFRETVEAGAEASAMPPPTTAPAGESSPPQNSSPAPAEPAPPPVQSTKNSDPAGPGVNRERETAE</sequence>
<proteinExistence type="inferred from homology"/>
<accession>Q2YAV5</accession>
<feature type="chain" id="PRO_0000301201" description="Sec-independent protein translocase protein TatB">
    <location>
        <begin position="1"/>
        <end position="147"/>
    </location>
</feature>
<feature type="transmembrane region" description="Helical" evidence="1">
    <location>
        <begin position="1"/>
        <end position="21"/>
    </location>
</feature>
<feature type="region of interest" description="Disordered" evidence="2">
    <location>
        <begin position="67"/>
        <end position="147"/>
    </location>
</feature>
<feature type="compositionally biased region" description="Basic and acidic residues" evidence="2">
    <location>
        <begin position="67"/>
        <end position="88"/>
    </location>
</feature>
<feature type="compositionally biased region" description="Low complexity" evidence="2">
    <location>
        <begin position="103"/>
        <end position="117"/>
    </location>
</feature>
<dbReference type="EMBL" id="CP000103">
    <property type="protein sequence ID" value="ABB74116.1"/>
    <property type="molecule type" value="Genomic_DNA"/>
</dbReference>
<dbReference type="RefSeq" id="WP_011380164.1">
    <property type="nucleotide sequence ID" value="NC_007614.1"/>
</dbReference>
<dbReference type="SMR" id="Q2YAV5"/>
<dbReference type="STRING" id="323848.Nmul_A0809"/>
<dbReference type="KEGG" id="nmu:Nmul_A0809"/>
<dbReference type="eggNOG" id="COG1826">
    <property type="taxonomic scope" value="Bacteria"/>
</dbReference>
<dbReference type="HOGENOM" id="CLU_086034_1_1_4"/>
<dbReference type="OrthoDB" id="9816005at2"/>
<dbReference type="Proteomes" id="UP000002718">
    <property type="component" value="Chromosome"/>
</dbReference>
<dbReference type="GO" id="GO:0033281">
    <property type="term" value="C:TAT protein transport complex"/>
    <property type="evidence" value="ECO:0007669"/>
    <property type="project" value="UniProtKB-UniRule"/>
</dbReference>
<dbReference type="GO" id="GO:0008320">
    <property type="term" value="F:protein transmembrane transporter activity"/>
    <property type="evidence" value="ECO:0007669"/>
    <property type="project" value="UniProtKB-UniRule"/>
</dbReference>
<dbReference type="GO" id="GO:0043953">
    <property type="term" value="P:protein transport by the Tat complex"/>
    <property type="evidence" value="ECO:0007669"/>
    <property type="project" value="UniProtKB-UniRule"/>
</dbReference>
<dbReference type="Gene3D" id="1.20.5.3310">
    <property type="match status" value="1"/>
</dbReference>
<dbReference type="HAMAP" id="MF_00237">
    <property type="entry name" value="TatB"/>
    <property type="match status" value="1"/>
</dbReference>
<dbReference type="InterPro" id="IPR003369">
    <property type="entry name" value="TatA/B/E"/>
</dbReference>
<dbReference type="InterPro" id="IPR018448">
    <property type="entry name" value="TatB"/>
</dbReference>
<dbReference type="NCBIfam" id="TIGR01410">
    <property type="entry name" value="tatB"/>
    <property type="match status" value="1"/>
</dbReference>
<dbReference type="PANTHER" id="PTHR33162">
    <property type="entry name" value="SEC-INDEPENDENT PROTEIN TRANSLOCASE PROTEIN TATA, CHLOROPLASTIC"/>
    <property type="match status" value="1"/>
</dbReference>
<dbReference type="PANTHER" id="PTHR33162:SF1">
    <property type="entry name" value="SEC-INDEPENDENT PROTEIN TRANSLOCASE PROTEIN TATA, CHLOROPLASTIC"/>
    <property type="match status" value="1"/>
</dbReference>
<dbReference type="Pfam" id="PF02416">
    <property type="entry name" value="TatA_B_E"/>
    <property type="match status" value="1"/>
</dbReference>
<dbReference type="PRINTS" id="PR01506">
    <property type="entry name" value="TATBPROTEIN"/>
</dbReference>
<name>TATB_NITMU</name>
<evidence type="ECO:0000255" key="1">
    <source>
        <dbReference type="HAMAP-Rule" id="MF_00237"/>
    </source>
</evidence>
<evidence type="ECO:0000256" key="2">
    <source>
        <dbReference type="SAM" id="MobiDB-lite"/>
    </source>
</evidence>
<organism>
    <name type="scientific">Nitrosospira multiformis (strain ATCC 25196 / NCIMB 11849 / C 71)</name>
    <dbReference type="NCBI Taxonomy" id="323848"/>
    <lineage>
        <taxon>Bacteria</taxon>
        <taxon>Pseudomonadati</taxon>
        <taxon>Pseudomonadota</taxon>
        <taxon>Betaproteobacteria</taxon>
        <taxon>Nitrosomonadales</taxon>
        <taxon>Nitrosomonadaceae</taxon>
        <taxon>Nitrosospira</taxon>
    </lineage>
</organism>
<comment type="function">
    <text evidence="1">Part of the twin-arginine translocation (Tat) system that transports large folded proteins containing a characteristic twin-arginine motif in their signal peptide across membranes. Together with TatC, TatB is part of a receptor directly interacting with Tat signal peptides. TatB may form an oligomeric binding site that transiently accommodates folded Tat precursor proteins before their translocation.</text>
</comment>
<comment type="subunit">
    <text evidence="1">The Tat system comprises two distinct complexes: a TatABC complex, containing multiple copies of TatA, TatB and TatC subunits, and a separate TatA complex, containing only TatA subunits. Substrates initially bind to the TatABC complex, which probably triggers association of the separate TatA complex to form the active translocon.</text>
</comment>
<comment type="subcellular location">
    <subcellularLocation>
        <location evidence="1">Cell inner membrane</location>
        <topology evidence="1">Single-pass membrane protein</topology>
    </subcellularLocation>
</comment>
<comment type="similarity">
    <text evidence="1">Belongs to the TatB family.</text>
</comment>
<reference key="1">
    <citation type="submission" date="2005-08" db="EMBL/GenBank/DDBJ databases">
        <title>Complete sequence of chromosome 1 of Nitrosospira multiformis ATCC 25196.</title>
        <authorList>
            <person name="Copeland A."/>
            <person name="Lucas S."/>
            <person name="Lapidus A."/>
            <person name="Barry K."/>
            <person name="Detter J.C."/>
            <person name="Glavina T."/>
            <person name="Hammon N."/>
            <person name="Israni S."/>
            <person name="Pitluck S."/>
            <person name="Chain P."/>
            <person name="Malfatti S."/>
            <person name="Shin M."/>
            <person name="Vergez L."/>
            <person name="Schmutz J."/>
            <person name="Larimer F."/>
            <person name="Land M."/>
            <person name="Hauser L."/>
            <person name="Kyrpides N."/>
            <person name="Lykidis A."/>
            <person name="Richardson P."/>
        </authorList>
    </citation>
    <scope>NUCLEOTIDE SEQUENCE [LARGE SCALE GENOMIC DNA]</scope>
    <source>
        <strain>ATCC 25196 / NCIMB 11849 / C 71</strain>
    </source>
</reference>